<organism>
    <name type="scientific">Rattus norvegicus</name>
    <name type="common">Rat</name>
    <dbReference type="NCBI Taxonomy" id="10116"/>
    <lineage>
        <taxon>Eukaryota</taxon>
        <taxon>Metazoa</taxon>
        <taxon>Chordata</taxon>
        <taxon>Craniata</taxon>
        <taxon>Vertebrata</taxon>
        <taxon>Euteleostomi</taxon>
        <taxon>Mammalia</taxon>
        <taxon>Eutheria</taxon>
        <taxon>Euarchontoglires</taxon>
        <taxon>Glires</taxon>
        <taxon>Rodentia</taxon>
        <taxon>Myomorpha</taxon>
        <taxon>Muroidea</taxon>
        <taxon>Muridae</taxon>
        <taxon>Murinae</taxon>
        <taxon>Rattus</taxon>
    </lineage>
</organism>
<evidence type="ECO:0000250" key="1"/>
<evidence type="ECO:0000250" key="2">
    <source>
        <dbReference type="UniProtKB" id="P24941"/>
    </source>
</evidence>
<evidence type="ECO:0000250" key="3">
    <source>
        <dbReference type="UniProtKB" id="P97377"/>
    </source>
</evidence>
<evidence type="ECO:0000255" key="4">
    <source>
        <dbReference type="PROSITE-ProRule" id="PRU00159"/>
    </source>
</evidence>
<evidence type="ECO:0000255" key="5">
    <source>
        <dbReference type="PROSITE-ProRule" id="PRU10027"/>
    </source>
</evidence>
<evidence type="ECO:0000269" key="6">
    <source>
    </source>
</evidence>
<evidence type="ECO:0000305" key="7"/>
<feature type="chain" id="PRO_0000085772" description="Cyclin-dependent kinase 2">
    <location>
        <begin position="1"/>
        <end position="298"/>
    </location>
</feature>
<feature type="domain" description="Protein kinase" evidence="4">
    <location>
        <begin position="4"/>
        <end position="286"/>
    </location>
</feature>
<feature type="active site" description="Proton acceptor" evidence="4 5">
    <location>
        <position position="127"/>
    </location>
</feature>
<feature type="binding site" evidence="4">
    <location>
        <begin position="10"/>
        <end position="18"/>
    </location>
    <ligand>
        <name>ATP</name>
        <dbReference type="ChEBI" id="CHEBI:30616"/>
    </ligand>
</feature>
<feature type="binding site" evidence="4">
    <location>
        <position position="33"/>
    </location>
    <ligand>
        <name>ATP</name>
        <dbReference type="ChEBI" id="CHEBI:30616"/>
    </ligand>
</feature>
<feature type="binding site" evidence="4">
    <location>
        <begin position="81"/>
        <end position="83"/>
    </location>
    <ligand>
        <name>ATP</name>
        <dbReference type="ChEBI" id="CHEBI:30616"/>
    </ligand>
</feature>
<feature type="binding site" evidence="4">
    <location>
        <position position="86"/>
    </location>
    <ligand>
        <name>ATP</name>
        <dbReference type="ChEBI" id="CHEBI:30616"/>
    </ligand>
</feature>
<feature type="binding site" evidence="4">
    <location>
        <begin position="129"/>
        <end position="132"/>
    </location>
    <ligand>
        <name>ATP</name>
        <dbReference type="ChEBI" id="CHEBI:30616"/>
    </ligand>
</feature>
<feature type="binding site" evidence="2">
    <location>
        <position position="132"/>
    </location>
    <ligand>
        <name>Mg(2+)</name>
        <dbReference type="ChEBI" id="CHEBI:18420"/>
    </ligand>
</feature>
<feature type="binding site" evidence="4">
    <location>
        <position position="145"/>
    </location>
    <ligand>
        <name>ATP</name>
        <dbReference type="ChEBI" id="CHEBI:30616"/>
    </ligand>
</feature>
<feature type="binding site" evidence="2">
    <location>
        <position position="145"/>
    </location>
    <ligand>
        <name>Mg(2+)</name>
        <dbReference type="ChEBI" id="CHEBI:18420"/>
    </ligand>
</feature>
<feature type="site" description="CDK7 binding" evidence="2">
    <location>
        <position position="9"/>
    </location>
</feature>
<feature type="site" description="CDK7 binding" evidence="2">
    <location>
        <begin position="88"/>
        <end position="89"/>
    </location>
</feature>
<feature type="site" description="CDK7 binding" evidence="2">
    <location>
        <position position="166"/>
    </location>
</feature>
<feature type="modified residue" description="N-acetylmethionine" evidence="2">
    <location>
        <position position="1"/>
    </location>
</feature>
<feature type="modified residue" description="N6-acetyllysine" evidence="2">
    <location>
        <position position="6"/>
    </location>
</feature>
<feature type="modified residue" description="Phosphothreonine" evidence="2">
    <location>
        <position position="14"/>
    </location>
</feature>
<feature type="modified residue" description="Phosphotyrosine; by WEE1" evidence="2">
    <location>
        <position position="15"/>
    </location>
</feature>
<feature type="modified residue" description="Phosphotyrosine" evidence="2">
    <location>
        <position position="19"/>
    </location>
</feature>
<feature type="modified residue" description="Phosphothreonine; by CAK and CCRK" evidence="2">
    <location>
        <position position="160"/>
    </location>
</feature>
<feature type="sequence conflict" description="In Ref. 2; BAA09638." evidence="7" ref="2">
    <original>V</original>
    <variation>C</variation>
    <location>
        <position position="79"/>
    </location>
</feature>
<feature type="sequence conflict" description="In Ref. 2; BAA09638." evidence="7" ref="2">
    <original>L</original>
    <variation>I</variation>
    <location>
        <position position="99"/>
    </location>
</feature>
<feature type="sequence conflict" description="In Ref. 2; BAA09638." evidence="7" ref="2">
    <original>L</original>
    <variation>C</variation>
    <location>
        <position position="124"/>
    </location>
</feature>
<sequence length="298" mass="33887">MENFQKVEKIGEGTYGVVYKAKNKLTGEVVALKKIRLDTETEGVPSTAIREISLLKELNHPNIVKLLDVIHTENKLYLVFEFLHQDLKKFMDASALTGLPLPLIKSYLFQLLQGLAFCHSHRVLHRDLKPQNLLINAEGSIKLADFGLARAFGVPVRTYTHEVVTLWYRAPEILLGCKYYSTAVDIWSLGCIFAEMVTRRALFPGDSEIDQLFRIFRTLGTPDEVVWPGVTSMPDYKPSFPKWARQDFSKVVPPLDEDGRSLLSQMLHYDPNKRISAKAALAHPFFQDVTKPVPHLRL</sequence>
<name>CDK2_RAT</name>
<dbReference type="EC" id="2.7.11.22" evidence="6"/>
<dbReference type="EMBL" id="D28753">
    <property type="protein sequence ID" value="BAA05947.1"/>
    <property type="molecule type" value="mRNA"/>
</dbReference>
<dbReference type="EMBL" id="D63162">
    <property type="protein sequence ID" value="BAA09638.1"/>
    <property type="molecule type" value="mRNA"/>
</dbReference>
<dbReference type="SMR" id="Q63699"/>
<dbReference type="ComplexPortal" id="CPX-2067">
    <property type="entry name" value="Cyclin A1-CDK2 complex"/>
</dbReference>
<dbReference type="ComplexPortal" id="CPX-2068">
    <property type="entry name" value="Cyclin A2-CDK2 complex"/>
</dbReference>
<dbReference type="ComplexPortal" id="CPX-2083">
    <property type="entry name" value="Cyclin E1-CDK2 complex"/>
</dbReference>
<dbReference type="ComplexPortal" id="CPX-2084">
    <property type="entry name" value="Cyclin E2-CDK2 complex"/>
</dbReference>
<dbReference type="DIP" id="DIP-36536N"/>
<dbReference type="FunCoup" id="Q63699">
    <property type="interactions" value="2425"/>
</dbReference>
<dbReference type="IntAct" id="Q63699">
    <property type="interactions" value="2"/>
</dbReference>
<dbReference type="STRING" id="10116.ENSRNOP00000032191"/>
<dbReference type="iPTMnet" id="Q63699"/>
<dbReference type="PhosphoSitePlus" id="Q63699"/>
<dbReference type="jPOST" id="Q63699"/>
<dbReference type="PaxDb" id="10116-ENSRNOP00000032191"/>
<dbReference type="UCSC" id="RGD:70486">
    <molecule id="Q63699-1"/>
    <property type="organism name" value="rat"/>
</dbReference>
<dbReference type="AGR" id="RGD:70486"/>
<dbReference type="RGD" id="70486">
    <property type="gene designation" value="Cdk2"/>
</dbReference>
<dbReference type="eggNOG" id="KOG0594">
    <property type="taxonomic scope" value="Eukaryota"/>
</dbReference>
<dbReference type="InParanoid" id="Q63699"/>
<dbReference type="PhylomeDB" id="Q63699"/>
<dbReference type="BRENDA" id="2.7.11.22">
    <property type="organism ID" value="5301"/>
</dbReference>
<dbReference type="Reactome" id="R-RNO-1538133">
    <property type="pathway name" value="G0 and Early G1"/>
</dbReference>
<dbReference type="Reactome" id="R-RNO-171319">
    <property type="pathway name" value="Telomere Extension By Telomerase"/>
</dbReference>
<dbReference type="Reactome" id="R-RNO-176187">
    <property type="pathway name" value="Activation of ATR in response to replication stress"/>
</dbReference>
<dbReference type="Reactome" id="R-RNO-176408">
    <property type="pathway name" value="Regulation of APC/C activators between G1/S and early anaphase"/>
</dbReference>
<dbReference type="Reactome" id="R-RNO-187577">
    <property type="pathway name" value="SCF(Skp2)-mediated degradation of p27/p21"/>
</dbReference>
<dbReference type="Reactome" id="R-RNO-2559582">
    <property type="pathway name" value="Senescence-Associated Secretory Phenotype (SASP)"/>
</dbReference>
<dbReference type="Reactome" id="R-RNO-2559586">
    <property type="pathway name" value="DNA Damage/Telomere Stress Induced Senescence"/>
</dbReference>
<dbReference type="Reactome" id="R-RNO-5693607">
    <property type="pathway name" value="Processing of DNA double-strand break ends"/>
</dbReference>
<dbReference type="Reactome" id="R-RNO-6804116">
    <property type="pathway name" value="TP53 Regulates Transcription of Genes Involved in G1 Cell Cycle Arrest"/>
</dbReference>
<dbReference type="Reactome" id="R-RNO-6804756">
    <property type="pathway name" value="Regulation of TP53 Activity through Phosphorylation"/>
</dbReference>
<dbReference type="Reactome" id="R-RNO-6804757">
    <property type="pathway name" value="Regulation of TP53 Degradation"/>
</dbReference>
<dbReference type="Reactome" id="R-RNO-68911">
    <property type="pathway name" value="G2 Phase"/>
</dbReference>
<dbReference type="Reactome" id="R-RNO-68949">
    <property type="pathway name" value="Orc1 removal from chromatin"/>
</dbReference>
<dbReference type="Reactome" id="R-RNO-68962">
    <property type="pathway name" value="Activation of the pre-replicative complex"/>
</dbReference>
<dbReference type="Reactome" id="R-RNO-69017">
    <property type="pathway name" value="CDK-mediated phosphorylation and removal of Cdc6"/>
</dbReference>
<dbReference type="Reactome" id="R-RNO-69200">
    <property type="pathway name" value="Phosphorylation of proteins involved in G1/S transition by active Cyclin E:Cdk2 complexes"/>
</dbReference>
<dbReference type="Reactome" id="R-RNO-69202">
    <property type="pathway name" value="Cyclin E associated events during G1/S transition"/>
</dbReference>
<dbReference type="Reactome" id="R-RNO-69231">
    <property type="pathway name" value="Cyclin D associated events in G1"/>
</dbReference>
<dbReference type="Reactome" id="R-RNO-69273">
    <property type="pathway name" value="Cyclin A/B1/B2 associated events during G2/M transition"/>
</dbReference>
<dbReference type="Reactome" id="R-RNO-69563">
    <property type="pathway name" value="p53-Dependent G1 DNA Damage Response"/>
</dbReference>
<dbReference type="Reactome" id="R-RNO-69656">
    <property type="pathway name" value="Cyclin A:Cdk2-associated events at S phase entry"/>
</dbReference>
<dbReference type="Reactome" id="R-RNO-8849470">
    <property type="pathway name" value="PTK6 Regulates Cell Cycle"/>
</dbReference>
<dbReference type="Reactome" id="R-RNO-9616222">
    <property type="pathway name" value="Transcriptional regulation of granulopoiesis"/>
</dbReference>
<dbReference type="PRO" id="PR:Q63699"/>
<dbReference type="Proteomes" id="UP000002494">
    <property type="component" value="Unplaced"/>
</dbReference>
<dbReference type="GO" id="GO:0015030">
    <property type="term" value="C:Cajal body"/>
    <property type="evidence" value="ECO:0000266"/>
    <property type="project" value="RGD"/>
</dbReference>
<dbReference type="GO" id="GO:0005813">
    <property type="term" value="C:centrosome"/>
    <property type="evidence" value="ECO:0007669"/>
    <property type="project" value="UniProtKB-SubCell"/>
</dbReference>
<dbReference type="GO" id="GO:0000781">
    <property type="term" value="C:chromosome, telomeric region"/>
    <property type="evidence" value="ECO:0000266"/>
    <property type="project" value="RGD"/>
</dbReference>
<dbReference type="GO" id="GO:0000793">
    <property type="term" value="C:condensed chromosome"/>
    <property type="evidence" value="ECO:0000266"/>
    <property type="project" value="RGD"/>
</dbReference>
<dbReference type="GO" id="GO:0097123">
    <property type="term" value="C:cyclin A1-CDK2 complex"/>
    <property type="evidence" value="ECO:0000266"/>
    <property type="project" value="RGD"/>
</dbReference>
<dbReference type="GO" id="GO:0097124">
    <property type="term" value="C:cyclin A2-CDK2 complex"/>
    <property type="evidence" value="ECO:0000266"/>
    <property type="project" value="RGD"/>
</dbReference>
<dbReference type="GO" id="GO:0097134">
    <property type="term" value="C:cyclin E1-CDK2 complex"/>
    <property type="evidence" value="ECO:0000266"/>
    <property type="project" value="RGD"/>
</dbReference>
<dbReference type="GO" id="GO:0097135">
    <property type="term" value="C:cyclin E2-CDK2 complex"/>
    <property type="evidence" value="ECO:0000266"/>
    <property type="project" value="RGD"/>
</dbReference>
<dbReference type="GO" id="GO:0000307">
    <property type="term" value="C:cyclin-dependent protein kinase holoenzyme complex"/>
    <property type="evidence" value="ECO:0000266"/>
    <property type="project" value="RGD"/>
</dbReference>
<dbReference type="GO" id="GO:0005737">
    <property type="term" value="C:cytoplasm"/>
    <property type="evidence" value="ECO:0000266"/>
    <property type="project" value="RGD"/>
</dbReference>
<dbReference type="GO" id="GO:0005768">
    <property type="term" value="C:endosome"/>
    <property type="evidence" value="ECO:0000266"/>
    <property type="project" value="RGD"/>
</dbReference>
<dbReference type="GO" id="GO:0001673">
    <property type="term" value="C:male germ cell nucleus"/>
    <property type="evidence" value="ECO:0000266"/>
    <property type="project" value="RGD"/>
</dbReference>
<dbReference type="GO" id="GO:0005635">
    <property type="term" value="C:nuclear envelope"/>
    <property type="evidence" value="ECO:0000266"/>
    <property type="project" value="RGD"/>
</dbReference>
<dbReference type="GO" id="GO:0005654">
    <property type="term" value="C:nucleoplasm"/>
    <property type="evidence" value="ECO:0000266"/>
    <property type="project" value="RGD"/>
</dbReference>
<dbReference type="GO" id="GO:0005634">
    <property type="term" value="C:nucleus"/>
    <property type="evidence" value="ECO:0000314"/>
    <property type="project" value="RGD"/>
</dbReference>
<dbReference type="GO" id="GO:0005667">
    <property type="term" value="C:transcription regulator complex"/>
    <property type="evidence" value="ECO:0000266"/>
    <property type="project" value="RGD"/>
</dbReference>
<dbReference type="GO" id="GO:0000805">
    <property type="term" value="C:X chromosome"/>
    <property type="evidence" value="ECO:0000266"/>
    <property type="project" value="RGD"/>
</dbReference>
<dbReference type="GO" id="GO:0000806">
    <property type="term" value="C:Y chromosome"/>
    <property type="evidence" value="ECO:0000266"/>
    <property type="project" value="RGD"/>
</dbReference>
<dbReference type="GO" id="GO:0005524">
    <property type="term" value="F:ATP binding"/>
    <property type="evidence" value="ECO:0007669"/>
    <property type="project" value="UniProtKB-KW"/>
</dbReference>
<dbReference type="GO" id="GO:0030332">
    <property type="term" value="F:cyclin binding"/>
    <property type="evidence" value="ECO:0000353"/>
    <property type="project" value="RGD"/>
</dbReference>
<dbReference type="GO" id="GO:0097472">
    <property type="term" value="F:cyclin-dependent protein kinase activity"/>
    <property type="evidence" value="ECO:0000266"/>
    <property type="project" value="RGD"/>
</dbReference>
<dbReference type="GO" id="GO:0004693">
    <property type="term" value="F:cyclin-dependent protein serine/threonine kinase activity"/>
    <property type="evidence" value="ECO:0000314"/>
    <property type="project" value="RGD"/>
</dbReference>
<dbReference type="GO" id="GO:0016301">
    <property type="term" value="F:kinase activity"/>
    <property type="evidence" value="ECO:0000266"/>
    <property type="project" value="RGD"/>
</dbReference>
<dbReference type="GO" id="GO:0000287">
    <property type="term" value="F:magnesium ion binding"/>
    <property type="evidence" value="ECO:0000266"/>
    <property type="project" value="RGD"/>
</dbReference>
<dbReference type="GO" id="GO:0019904">
    <property type="term" value="F:protein domain specific binding"/>
    <property type="evidence" value="ECO:0000266"/>
    <property type="project" value="RGD"/>
</dbReference>
<dbReference type="GO" id="GO:0004672">
    <property type="term" value="F:protein kinase activity"/>
    <property type="evidence" value="ECO:0000266"/>
    <property type="project" value="RGD"/>
</dbReference>
<dbReference type="GO" id="GO:0106310">
    <property type="term" value="F:protein serine kinase activity"/>
    <property type="evidence" value="ECO:0007669"/>
    <property type="project" value="RHEA"/>
</dbReference>
<dbReference type="GO" id="GO:0004674">
    <property type="term" value="F:protein serine/threonine kinase activity"/>
    <property type="evidence" value="ECO:0000266"/>
    <property type="project" value="RGD"/>
</dbReference>
<dbReference type="GO" id="GO:0044877">
    <property type="term" value="F:protein-containing complex binding"/>
    <property type="evidence" value="ECO:0000353"/>
    <property type="project" value="RGD"/>
</dbReference>
<dbReference type="GO" id="GO:0051301">
    <property type="term" value="P:cell division"/>
    <property type="evidence" value="ECO:0007669"/>
    <property type="project" value="UniProtKB-KW"/>
</dbReference>
<dbReference type="GO" id="GO:0032869">
    <property type="term" value="P:cellular response to insulin stimulus"/>
    <property type="evidence" value="ECO:0000314"/>
    <property type="project" value="RGD"/>
</dbReference>
<dbReference type="GO" id="GO:0007099">
    <property type="term" value="P:centriole replication"/>
    <property type="evidence" value="ECO:0000266"/>
    <property type="project" value="RGD"/>
</dbReference>
<dbReference type="GO" id="GO:0006338">
    <property type="term" value="P:chromatin remodeling"/>
    <property type="evidence" value="ECO:0007669"/>
    <property type="project" value="GOC"/>
</dbReference>
<dbReference type="GO" id="GO:0006974">
    <property type="term" value="P:DNA damage response"/>
    <property type="evidence" value="ECO:0000315"/>
    <property type="project" value="RGD"/>
</dbReference>
<dbReference type="GO" id="GO:0006281">
    <property type="term" value="P:DNA repair"/>
    <property type="evidence" value="ECO:0007669"/>
    <property type="project" value="UniProtKB-KW"/>
</dbReference>
<dbReference type="GO" id="GO:1904860">
    <property type="term" value="P:DNA synthesis involved in mitotic DNA replication"/>
    <property type="evidence" value="ECO:0000315"/>
    <property type="project" value="RGD"/>
</dbReference>
<dbReference type="GO" id="GO:0006351">
    <property type="term" value="P:DNA-templated transcription"/>
    <property type="evidence" value="ECO:0000266"/>
    <property type="project" value="RGD"/>
</dbReference>
<dbReference type="GO" id="GO:0000082">
    <property type="term" value="P:G1/S transition of mitotic cell cycle"/>
    <property type="evidence" value="ECO:0000266"/>
    <property type="project" value="RGD"/>
</dbReference>
<dbReference type="GO" id="GO:0002088">
    <property type="term" value="P:lens development in camera-type eye"/>
    <property type="evidence" value="ECO:0000270"/>
    <property type="project" value="RGD"/>
</dbReference>
<dbReference type="GO" id="GO:0097421">
    <property type="term" value="P:liver regeneration"/>
    <property type="evidence" value="ECO:0000270"/>
    <property type="project" value="RGD"/>
</dbReference>
<dbReference type="GO" id="GO:0051321">
    <property type="term" value="P:meiotic cell cycle"/>
    <property type="evidence" value="ECO:0007669"/>
    <property type="project" value="UniProtKB-KW"/>
</dbReference>
<dbReference type="GO" id="GO:0042177">
    <property type="term" value="P:negative regulation of protein catabolic process"/>
    <property type="evidence" value="ECO:0000266"/>
    <property type="project" value="RGD"/>
</dbReference>
<dbReference type="GO" id="GO:0000122">
    <property type="term" value="P:negative regulation of transcription by RNA polymerase II"/>
    <property type="evidence" value="ECO:0000266"/>
    <property type="project" value="RGD"/>
</dbReference>
<dbReference type="GO" id="GO:0008284">
    <property type="term" value="P:positive regulation of cell population proliferation"/>
    <property type="evidence" value="ECO:0000266"/>
    <property type="project" value="RGD"/>
</dbReference>
<dbReference type="GO" id="GO:0032298">
    <property type="term" value="P:positive regulation of DNA-templated DNA replication initiation"/>
    <property type="evidence" value="ECO:0000266"/>
    <property type="project" value="RGD"/>
</dbReference>
<dbReference type="GO" id="GO:0045893">
    <property type="term" value="P:positive regulation of DNA-templated transcription"/>
    <property type="evidence" value="ECO:0000266"/>
    <property type="project" value="RGD"/>
</dbReference>
<dbReference type="GO" id="GO:0031453">
    <property type="term" value="P:positive regulation of heterochromatin formation"/>
    <property type="evidence" value="ECO:0000266"/>
    <property type="project" value="RGD"/>
</dbReference>
<dbReference type="GO" id="GO:1904146">
    <property type="term" value="P:positive regulation of meiotic cell cycle process involved in oocyte maturation"/>
    <property type="evidence" value="ECO:0000266"/>
    <property type="project" value="RGD"/>
</dbReference>
<dbReference type="GO" id="GO:0043687">
    <property type="term" value="P:post-translational protein modification"/>
    <property type="evidence" value="ECO:0000266"/>
    <property type="project" value="RGD"/>
</dbReference>
<dbReference type="GO" id="GO:0006813">
    <property type="term" value="P:potassium ion transport"/>
    <property type="evidence" value="ECO:0000266"/>
    <property type="project" value="RGD"/>
</dbReference>
<dbReference type="GO" id="GO:0007265">
    <property type="term" value="P:Ras protein signal transduction"/>
    <property type="evidence" value="ECO:0000266"/>
    <property type="project" value="RGD"/>
</dbReference>
<dbReference type="GO" id="GO:0010389">
    <property type="term" value="P:regulation of G2/M transition of mitotic cell cycle"/>
    <property type="evidence" value="ECO:0000318"/>
    <property type="project" value="GO_Central"/>
</dbReference>
<dbReference type="GO" id="GO:0010468">
    <property type="term" value="P:regulation of gene expression"/>
    <property type="evidence" value="ECO:0000318"/>
    <property type="project" value="GO_Central"/>
</dbReference>
<dbReference type="GO" id="GO:0046686">
    <property type="term" value="P:response to cadmium ion"/>
    <property type="evidence" value="ECO:0000270"/>
    <property type="project" value="RGD"/>
</dbReference>
<dbReference type="GO" id="GO:0051591">
    <property type="term" value="P:response to cAMP"/>
    <property type="evidence" value="ECO:0000314"/>
    <property type="project" value="RGD"/>
</dbReference>
<dbReference type="GO" id="GO:0051602">
    <property type="term" value="P:response to electrical stimulus"/>
    <property type="evidence" value="ECO:0000314"/>
    <property type="project" value="RGD"/>
</dbReference>
<dbReference type="GO" id="GO:0032355">
    <property type="term" value="P:response to estradiol"/>
    <property type="evidence" value="ECO:0000270"/>
    <property type="project" value="RGD"/>
</dbReference>
<dbReference type="GO" id="GO:0045471">
    <property type="term" value="P:response to ethanol"/>
    <property type="evidence" value="ECO:0000270"/>
    <property type="project" value="RGD"/>
</dbReference>
<dbReference type="GO" id="GO:0009636">
    <property type="term" value="P:response to toxic substance"/>
    <property type="evidence" value="ECO:0000270"/>
    <property type="project" value="RGD"/>
</dbReference>
<dbReference type="GO" id="GO:0009410">
    <property type="term" value="P:response to xenobiotic stimulus"/>
    <property type="evidence" value="ECO:0000270"/>
    <property type="project" value="RGD"/>
</dbReference>
<dbReference type="GO" id="GO:0007165">
    <property type="term" value="P:signal transduction"/>
    <property type="evidence" value="ECO:0000318"/>
    <property type="project" value="GO_Central"/>
</dbReference>
<dbReference type="GO" id="GO:0043247">
    <property type="term" value="P:telomere maintenance in response to DNA damage"/>
    <property type="evidence" value="ECO:0000266"/>
    <property type="project" value="RGD"/>
</dbReference>
<dbReference type="CDD" id="cd07860">
    <property type="entry name" value="STKc_CDK2_3"/>
    <property type="match status" value="1"/>
</dbReference>
<dbReference type="FunFam" id="1.10.510.10:FF:000144">
    <property type="entry name" value="Cyclin-dependent kinase 2"/>
    <property type="match status" value="1"/>
</dbReference>
<dbReference type="FunFam" id="3.30.200.20:FF:000599">
    <property type="entry name" value="Cyclin-dependent kinase 2"/>
    <property type="match status" value="1"/>
</dbReference>
<dbReference type="Gene3D" id="3.30.200.20">
    <property type="entry name" value="Phosphorylase Kinase, domain 1"/>
    <property type="match status" value="1"/>
</dbReference>
<dbReference type="Gene3D" id="1.10.510.10">
    <property type="entry name" value="Transferase(Phosphotransferase) domain 1"/>
    <property type="match status" value="1"/>
</dbReference>
<dbReference type="InterPro" id="IPR050108">
    <property type="entry name" value="CDK"/>
</dbReference>
<dbReference type="InterPro" id="IPR011009">
    <property type="entry name" value="Kinase-like_dom_sf"/>
</dbReference>
<dbReference type="InterPro" id="IPR000719">
    <property type="entry name" value="Prot_kinase_dom"/>
</dbReference>
<dbReference type="InterPro" id="IPR017441">
    <property type="entry name" value="Protein_kinase_ATP_BS"/>
</dbReference>
<dbReference type="InterPro" id="IPR008271">
    <property type="entry name" value="Ser/Thr_kinase_AS"/>
</dbReference>
<dbReference type="PANTHER" id="PTHR24056">
    <property type="entry name" value="CELL DIVISION PROTEIN KINASE"/>
    <property type="match status" value="1"/>
</dbReference>
<dbReference type="PANTHER" id="PTHR24056:SF521">
    <property type="entry name" value="CYCLIN-DEPENDENT KINASE 2"/>
    <property type="match status" value="1"/>
</dbReference>
<dbReference type="Pfam" id="PF00069">
    <property type="entry name" value="Pkinase"/>
    <property type="match status" value="1"/>
</dbReference>
<dbReference type="SMART" id="SM00220">
    <property type="entry name" value="S_TKc"/>
    <property type="match status" value="1"/>
</dbReference>
<dbReference type="SUPFAM" id="SSF56112">
    <property type="entry name" value="Protein kinase-like (PK-like)"/>
    <property type="match status" value="1"/>
</dbReference>
<dbReference type="PROSITE" id="PS00107">
    <property type="entry name" value="PROTEIN_KINASE_ATP"/>
    <property type="match status" value="1"/>
</dbReference>
<dbReference type="PROSITE" id="PS50011">
    <property type="entry name" value="PROTEIN_KINASE_DOM"/>
    <property type="match status" value="1"/>
</dbReference>
<dbReference type="PROSITE" id="PS00108">
    <property type="entry name" value="PROTEIN_KINASE_ST"/>
    <property type="match status" value="1"/>
</dbReference>
<protein>
    <recommendedName>
        <fullName>Cyclin-dependent kinase 2</fullName>
        <ecNumber evidence="6">2.7.11.22</ecNumber>
    </recommendedName>
    <alternativeName>
        <fullName>Cell division protein kinase 2</fullName>
    </alternativeName>
</protein>
<comment type="function">
    <text evidence="2 3 6">Serine/threonine-protein kinase involved in the control of the cell cycle; essential for meiosis, but dispensable for mitosis (By similarity). Phosphorylates CABLES1, CTNNB1, CDK2AP2, ERCC6, NBN, USP37, p53/TP53, NPM1, CDK7, RB1, BRCA2, MYC, NPAT, EZH2 (PubMed:10542199). Triggers duplication of centrosomes and DNA (By similarity). Acts at the G1-S transition to promote the E2F transcriptional program and the initiation of DNA synthesis, and modulates G2 progression; controls the timing of entry into mitosis/meiosis by controlling the subsequent activation of cyclin B/CDK1 by phosphorylation, and coordinates the activation of cyclin B/CDK1 at the centrosome and in the nucleus (By similarity). Crucial role in orchestrating a fine balance between cellular proliferation, cell death, and DNA repair in embryonic stem cells (ESCs) (By similarity). Activity of CDK2 is maximal during S phase and G2; activated by interaction with cyclin E during the early stages of DNA synthesis to permit G1-S transition, and subsequently activated by cyclin A2 (cyclin A1 in germ cells) during the late stages of DNA replication to drive the transition from S phase to mitosis, the G2 phase (By similarity). EZH2 phosphorylation promotes H3K27me3 maintenance and epigenetic gene silencing (By similarity). Cyclin E/CDK2 prevents oxidative stress-mediated Ras-induced senescence by phosphorylating MYC (By similarity). Involved in G1-S phase DNA damage checkpoint that prevents cells with damaged DNA from initiating mitosis; regulates homologous recombination-dependent repair by phosphorylating BRCA2, this phosphorylation is low in S phase when recombination is active, but increases as cells progress towards mitosis (By similarity). In response to DNA damage, double-strand break repair by homologous recombination a reduction of CDK2-mediated BRCA2 phosphorylation (By similarity). Involved in regulation of telomere repair by mediating phosphorylation of NBN (By similarity). Phosphorylation of RB1 disturbs its interaction with E2F1 (By similarity). NPM1 phosphorylation by cyclin E/CDK2 promotes its dissociation from unduplicated centrosomes, thus initiating centrosome duplication (By similarity). Cyclin E/CDK2-mediated phosphorylation of NPAT at G1-S transition and until prophase stimulates the NPAT-mediated activation of histone gene transcription during S phase (By similarity). Required for vitamin D-mediated growth inhibition by being itself inactivated (By similarity). Involved in the nitric oxide- (NO) mediated signaling in a nitrosylation/activation-dependent manner (By similarity). USP37 is activated by phosphorylation and thus triggers G1-S transition (By similarity). CTNNB1 phosphorylation regulates insulin internalization (By similarity). Phosphorylates FOXP3 and negatively regulates its transcriptional activity and protein stability (By similarity). Phosphorylates ERCC6 which is essential for its chromatin remodeling activity at DNA double-strand breaks (By similarity). Acts as a regulator of the phosphatidylinositol 3-kinase/protein kinase B signal transduction by mediating phosphorylation of the C-terminus of protein kinase B (PKB/AKT1 and PKB/AKT2), promoting its activation (By similarity).</text>
</comment>
<comment type="catalytic activity">
    <reaction evidence="6">
        <text>L-seryl-[protein] + ATP = O-phospho-L-seryl-[protein] + ADP + H(+)</text>
        <dbReference type="Rhea" id="RHEA:17989"/>
        <dbReference type="Rhea" id="RHEA-COMP:9863"/>
        <dbReference type="Rhea" id="RHEA-COMP:11604"/>
        <dbReference type="ChEBI" id="CHEBI:15378"/>
        <dbReference type="ChEBI" id="CHEBI:29999"/>
        <dbReference type="ChEBI" id="CHEBI:30616"/>
        <dbReference type="ChEBI" id="CHEBI:83421"/>
        <dbReference type="ChEBI" id="CHEBI:456216"/>
        <dbReference type="EC" id="2.7.11.22"/>
    </reaction>
</comment>
<comment type="catalytic activity">
    <reaction evidence="6">
        <text>L-threonyl-[protein] + ATP = O-phospho-L-threonyl-[protein] + ADP + H(+)</text>
        <dbReference type="Rhea" id="RHEA:46608"/>
        <dbReference type="Rhea" id="RHEA-COMP:11060"/>
        <dbReference type="Rhea" id="RHEA-COMP:11605"/>
        <dbReference type="ChEBI" id="CHEBI:15378"/>
        <dbReference type="ChEBI" id="CHEBI:30013"/>
        <dbReference type="ChEBI" id="CHEBI:30616"/>
        <dbReference type="ChEBI" id="CHEBI:61977"/>
        <dbReference type="ChEBI" id="CHEBI:456216"/>
        <dbReference type="EC" id="2.7.11.22"/>
    </reaction>
</comment>
<comment type="cofactor">
    <cofactor evidence="2">
        <name>Mg(2+)</name>
        <dbReference type="ChEBI" id="CHEBI:18420"/>
    </cofactor>
    <text evidence="2">Binds 2 Mg(2+) ions.</text>
</comment>
<comment type="activity regulation">
    <text evidence="2">Phosphorylation at Thr-14 or Tyr-15 inactivates the enzyme, while phosphorylation at Thr-160 activates it. Stimulated by MYC. Inactivated by CDKN1A (p21) (By similarity).</text>
</comment>
<comment type="subunit">
    <text evidence="2 3 6">Found in a complex with CABLES1, CCNA1 and CCNE1. Interacts with CABLES1 (By similarity). Interacts with UHRF2. Part of a complex consisting of UHRF2, CDK2 and CCNE1. Interacts with the Speedy/Ringo proteins SPDYA and SPDYC. Interaction with SPDYA promotes kinase activation via a conformation change that alleviates obstruction of the substrate-binding cleft by the T-loop. Found in a complex with both SPDYA and CDKN1B/KIP1. Binds to RB1 (PubMed:10542199). Binds to CDK7. Binding to CDKN1A (p21) leads to CDK2/cyclin E inactivation at the G1-S phase DNA damage checkpoint, thereby arresting cells at the G1-S transition during DNA repair. Associated with PTPN6 and beta-catenin/CTNNB1. Interacts with CACUL1. May interact with CEP63. Interacts with ANKRD17. Interacts with CEBPA (when phosphorylated). Forms a ternary complex with CCNA2 and CDKN1B; CDKN1B inhibits the kinase activity of CDK2 through conformational rearrangements. Interacts with cyclins A, B1, B3, D, or E. Interacts with CDK2AP2 (By similarity).</text>
</comment>
<comment type="subcellular location">
    <subcellularLocation>
        <location evidence="1">Cytoplasm</location>
        <location evidence="1">Cytoskeleton</location>
        <location evidence="1">Microtubule organizing center</location>
        <location evidence="1">Centrosome</location>
    </subcellularLocation>
    <subcellularLocation>
        <location evidence="1">Nucleus</location>
        <location evidence="1">Cajal body</location>
    </subcellularLocation>
    <subcellularLocation>
        <location evidence="1">Cytoplasm</location>
    </subcellularLocation>
    <subcellularLocation>
        <location evidence="1">Endosome</location>
    </subcellularLocation>
    <text evidence="1">Localized at the centrosomes in late G2 phase after separation of the centrosomes but before the start of prophase. Nuclear-cytoplasmic trafficking is mediated during the inhibition by 1,25-(OH)(2)D(3) (By similarity).</text>
</comment>
<comment type="alternative products">
    <event type="alternative splicing"/>
    <isoform>
        <id>Q63699-1</id>
        <name>CDK2-alpha</name>
        <sequence type="displayed"/>
    </isoform>
    <isoform>
        <id>Q63699-2</id>
        <name>CDK2-beta</name>
        <sequence type="not described"/>
    </isoform>
</comment>
<comment type="induction">
    <text evidence="6">Induced transiently by TGFB1 at an early phase of TGFB1-mediated apoptosis.</text>
</comment>
<comment type="PTM">
    <text evidence="2">Phosphorylated at Thr-160 by CDK7 in a CAK complex. Phosphorylation at Thr-160 promotes kinase activity, whereas phosphorylation at Tyr-15 by WEE1 reduces slightly kinase activity. Phosphorylated on Thr-14 and Tyr-15 during S and G2 phases before being dephosphorylated by CDC25A.</text>
</comment>
<comment type="PTM">
    <text evidence="2">Nitrosylated after treatment with nitric oxide (DETA-NO).</text>
</comment>
<comment type="similarity">
    <text evidence="7">Belongs to the protein kinase superfamily. CMGC Ser/Thr protein kinase family. CDC2/CDKX subfamily.</text>
</comment>
<reference key="1">
    <citation type="journal article" date="1995" name="Oncogene">
        <title>A variant form of cyclin-dependent kinase 2 (Cdk2) in a malignantly transformed rat thyroid (FRTL-Tc) cell line.</title>
        <authorList>
            <person name="Kotani S."/>
            <person name="Endo T."/>
            <person name="Kitagawa M."/>
            <person name="Higashi H."/>
            <person name="Onaya T."/>
        </authorList>
    </citation>
    <scope>NUCLEOTIDE SEQUENCE [MRNA]</scope>
    <source>
        <tissue>Thyroid</tissue>
    </source>
</reference>
<reference key="2">
    <citation type="journal article" date="1995" name="Biochem. Mol. Biol. Int.">
        <title>Synergistic gene expressions of cyclin E, cdk2, cdk5 and E2F-1 during the prolactin-induced G1/S transition in rat Nb2 pre-T lymphoma cells.</title>
        <authorList>
            <person name="Hosokawa Y."/>
            <person name="Yang M."/>
            <person name="Kaneko S."/>
            <person name="Tanaka M."/>
            <person name="Nakashima K."/>
        </authorList>
    </citation>
    <scope>NUCLEOTIDE SEQUENCE [MRNA] OF 19-124</scope>
</reference>
<reference key="3">
    <citation type="journal article" date="1999" name="J. Biol. Chem.">
        <title>Cdc2 and Cdk2 kinase activated by transforming growth factor-beta1 trigger apoptosis through the phosphorylation of retinoblastoma protein in FaO hepatoma cells.</title>
        <authorList>
            <person name="Choi K.S."/>
            <person name="Eom Y.W."/>
            <person name="Kang Y."/>
            <person name="Ha M.J."/>
            <person name="Rhee H."/>
            <person name="Yoon J.-W."/>
            <person name="Kim S.-J."/>
        </authorList>
    </citation>
    <scope>FUNCTION AS RB1 KINASE</scope>
    <scope>CATALYTIC ACTIVITY</scope>
    <scope>INDUCTION BY TGFB1</scope>
    <scope>INTERACTION WITH RB1</scope>
</reference>
<proteinExistence type="evidence at protein level"/>
<keyword id="KW-0007">Acetylation</keyword>
<keyword id="KW-0025">Alternative splicing</keyword>
<keyword id="KW-0067">ATP-binding</keyword>
<keyword id="KW-0131">Cell cycle</keyword>
<keyword id="KW-0132">Cell division</keyword>
<keyword id="KW-0963">Cytoplasm</keyword>
<keyword id="KW-0206">Cytoskeleton</keyword>
<keyword id="KW-0227">DNA damage</keyword>
<keyword id="KW-0234">DNA repair</keyword>
<keyword id="KW-0967">Endosome</keyword>
<keyword id="KW-0418">Kinase</keyword>
<keyword id="KW-0460">Magnesium</keyword>
<keyword id="KW-0469">Meiosis</keyword>
<keyword id="KW-0479">Metal-binding</keyword>
<keyword id="KW-0498">Mitosis</keyword>
<keyword id="KW-0547">Nucleotide-binding</keyword>
<keyword id="KW-0539">Nucleus</keyword>
<keyword id="KW-0597">Phosphoprotein</keyword>
<keyword id="KW-1185">Reference proteome</keyword>
<keyword id="KW-0723">Serine/threonine-protein kinase</keyword>
<keyword id="KW-0808">Transferase</keyword>
<accession>Q63699</accession>
<accession>O09136</accession>
<gene>
    <name type="primary">Cdk2</name>
    <name type="synonym">Cdkn2</name>
</gene>